<comment type="similarity">
    <text evidence="2">In the N-terminal section; belongs to the transposase 2 family.</text>
</comment>
<comment type="similarity">
    <text evidence="2">In the C-terminal section; belongs to the transposase 35 family.</text>
</comment>
<evidence type="ECO:0000250" key="1">
    <source>
        <dbReference type="UniProtKB" id="Q7DF80"/>
    </source>
</evidence>
<evidence type="ECO:0000305" key="2"/>
<organismHost>
    <name type="scientific">Acidianus convivator</name>
    <dbReference type="NCBI Taxonomy" id="269667"/>
</organismHost>
<organism>
    <name type="scientific">Acidianus two-tailed virus</name>
    <name type="common">ATV</name>
    <dbReference type="NCBI Taxonomy" id="315953"/>
    <lineage>
        <taxon>Viruses</taxon>
        <taxon>Viruses incertae sedis</taxon>
        <taxon>Bicaudaviridae</taxon>
        <taxon>Bicaudavirus</taxon>
    </lineage>
</organism>
<keyword id="KW-0233">DNA recombination</keyword>
<keyword id="KW-0238">DNA-binding</keyword>
<keyword id="KW-0479">Metal-binding</keyword>
<keyword id="KW-1185">Reference proteome</keyword>
<keyword id="KW-0815">Transposition</keyword>
<keyword id="KW-0862">Zinc</keyword>
<sequence>MARREKNPIRATVAMNIGLSDSLLAFVNNYVKALRFSLFWMKENVKNPNEKGALSKVHEGLYEKLRKEYNLPSKVTEDCYRDALAIYKSWYNNPKKGRFPRVYKPTVWLTPKQSYTVDLEKMTVRIASVGELPILGYPRNLKEYANWKMKEARLTIKDGKALLKVTFEKEEEKVKPKDSVAVDINMNDIVVGKDDTHYVRIPTRLHDAHHFKSLAENLQKKYPRRWKQNRRILHRARSFHQKAKLIMEDYARKVGKWVVEIAEGLGANVIKLEDLKNLIKDVNKLPAEFRDKLYLMQYRRIQYWIEWQAKKHGMIVEFVNPSYSSVSCPKCGHKMVEIAYRYFHCPSCGYENDRDVIAIMNLNGRGSLTLSTAPQMRDVAPNR</sequence>
<feature type="chain" id="PRO_0000389029" description="TnpB-like protein ORF383B">
    <location>
        <begin position="1"/>
        <end position="383"/>
    </location>
</feature>
<feature type="binding site" evidence="1">
    <location>
        <position position="328"/>
    </location>
    <ligand>
        <name>Zn(2+)</name>
        <dbReference type="ChEBI" id="CHEBI:29105"/>
    </ligand>
</feature>
<feature type="binding site" evidence="1">
    <location>
        <position position="331"/>
    </location>
    <ligand>
        <name>Zn(2+)</name>
        <dbReference type="ChEBI" id="CHEBI:29105"/>
    </ligand>
</feature>
<feature type="binding site" evidence="1">
    <location>
        <position position="345"/>
    </location>
    <ligand>
        <name>Zn(2+)</name>
        <dbReference type="ChEBI" id="CHEBI:29105"/>
    </ligand>
</feature>
<feature type="binding site" evidence="1">
    <location>
        <position position="348"/>
    </location>
    <ligand>
        <name>Zn(2+)</name>
        <dbReference type="ChEBI" id="CHEBI:29105"/>
    </ligand>
</feature>
<reference key="1">
    <citation type="journal article" date="2005" name="Nature">
        <title>Virology: independent virus development outside a host.</title>
        <authorList>
            <person name="Haring M."/>
            <person name="Vestergaard G."/>
            <person name="Rachel R."/>
            <person name="Chen L."/>
            <person name="Garrett R.A."/>
            <person name="Prangishvili D."/>
        </authorList>
    </citation>
    <scope>NUCLEOTIDE SEQUENCE [GENOMIC DNA]</scope>
</reference>
<accession>Q3V4T9</accession>
<protein>
    <recommendedName>
        <fullName>TnpB-like protein ORF383B</fullName>
    </recommendedName>
</protein>
<proteinExistence type="inferred from homology"/>
<name>Y383B_ATV</name>
<dbReference type="EMBL" id="AJ888457">
    <property type="protein sequence ID" value="CAI59875.1"/>
    <property type="molecule type" value="Genomic_DNA"/>
</dbReference>
<dbReference type="RefSeq" id="YP_319899.1">
    <property type="nucleotide sequence ID" value="NC_007409.1"/>
</dbReference>
<dbReference type="SMR" id="Q3V4T9"/>
<dbReference type="GeneID" id="4484277"/>
<dbReference type="KEGG" id="vg:4484277"/>
<dbReference type="OrthoDB" id="276at10442"/>
<dbReference type="Proteomes" id="UP000002150">
    <property type="component" value="Genome"/>
</dbReference>
<dbReference type="GO" id="GO:0003677">
    <property type="term" value="F:DNA binding"/>
    <property type="evidence" value="ECO:0007669"/>
    <property type="project" value="UniProtKB-KW"/>
</dbReference>
<dbReference type="GO" id="GO:0046872">
    <property type="term" value="F:metal ion binding"/>
    <property type="evidence" value="ECO:0007669"/>
    <property type="project" value="UniProtKB-KW"/>
</dbReference>
<dbReference type="GO" id="GO:0006310">
    <property type="term" value="P:DNA recombination"/>
    <property type="evidence" value="ECO:0007669"/>
    <property type="project" value="UniProtKB-KW"/>
</dbReference>
<dbReference type="GO" id="GO:0032196">
    <property type="term" value="P:transposition"/>
    <property type="evidence" value="ECO:0007669"/>
    <property type="project" value="UniProtKB-KW"/>
</dbReference>
<dbReference type="InterPro" id="IPR010095">
    <property type="entry name" value="Cas12f1-like_TNB"/>
</dbReference>
<dbReference type="InterPro" id="IPR051399">
    <property type="entry name" value="RNA-guided_DNA_endo/Transpos"/>
</dbReference>
<dbReference type="NCBIfam" id="NF040570">
    <property type="entry name" value="guided_TnpB"/>
    <property type="match status" value="1"/>
</dbReference>
<dbReference type="NCBIfam" id="TIGR01766">
    <property type="entry name" value="IS200/IS605 family accessory protein TnpB-like domain"/>
    <property type="match status" value="1"/>
</dbReference>
<dbReference type="PANTHER" id="PTHR30405">
    <property type="entry name" value="TRANSPOSASE"/>
    <property type="match status" value="1"/>
</dbReference>
<dbReference type="PANTHER" id="PTHR30405:SF21">
    <property type="entry name" value="TRANSPOSASE-RELATED"/>
    <property type="match status" value="1"/>
</dbReference>
<dbReference type="Pfam" id="PF07282">
    <property type="entry name" value="Cas12f1-like_TNB"/>
    <property type="match status" value="1"/>
</dbReference>